<comment type="function">
    <text evidence="1">ATP-dependent serine protease that mediates the selective degradation of mutant and abnormal proteins as well as certain short-lived regulatory proteins. Required for cellular homeostasis and for survival from DNA damage and developmental changes induced by stress. Degrades polypeptides processively to yield small peptide fragments that are 5 to 10 amino acids long. Binds to DNA in a double-stranded, site-specific manner.</text>
</comment>
<comment type="catalytic activity">
    <reaction evidence="1">
        <text>Hydrolysis of proteins in presence of ATP.</text>
        <dbReference type="EC" id="3.4.21.53"/>
    </reaction>
</comment>
<comment type="subunit">
    <text evidence="1">Homohexamer. Organized in a ring with a central cavity.</text>
</comment>
<comment type="subcellular location">
    <subcellularLocation>
        <location evidence="1">Cytoplasm</location>
    </subcellularLocation>
</comment>
<comment type="induction">
    <text evidence="1">By heat shock.</text>
</comment>
<comment type="similarity">
    <text evidence="1">Belongs to the peptidase S16 family.</text>
</comment>
<sequence length="804" mass="88646">MPTGDPSSRTPPSPDADSVPILPLRNSVLFPMSVVPINVGRPRSVRLVEDLLGRERALVGVISQRSPDVDEPTFKELYSVGTVARVVKVIRLGPNNYSVVLNGLGRFRVKSAFSLEPYMRARIERIPESLVRDVELEALGAGLREATREVLGLMPNLPRDTAGILDNVREPGALADLIASNFPQAQASVGDKQEILEAFDVKARVRLVLAMVGRQLEVLRVKKEISSMVQEEMGKSQREYILRQQMKSIKEELGEGGDDDEIEELRERIRRAKVPAEVDKVVRKQLSRLRSMAQQSAEFNVTKTYLEWIADLPWSKTTVDKLSVESVRRCLDEDHLGLEKVKKRIVEYSAIRQLRTDKKGPILLFIGPPGVGKTSLGKSIARSMGRRYERIALGGVRDEAEIRGHRRTYVGALPGRILQALKKAGTKNPVLVLDEVDKMGVDLRGDPAAALLEVLDPEQNSTFQDHYLDLPFDLSQVMFLATANNWDGIPGPLVDRMEVIEVPGYTRTDKLGIAREFLVPKQLSAHGLTDERLEFTEPGIEAVVDHYTREAGVRGLERQIAAVCRATAVKVAEGNDVREVATPEHVEQVLGPHKHRPEIAERTLQPGVATGLAWTPAGGEILFIEATKMPGKGNVVLTGNMRNVMQESASTAVSFVRSKADRLHLDPEWLKEIDLHVHIPQHGTPKDGPSAGVTMFAAVASLLLGAPVRSDVAMTGEISLRGRVMPVGGVKEKLLAAHRAGIRHVLIPAKNRRDLEDVPQDVKDQIKITMVSSMEEILPLVLEPPRRAPAQSASPEELEEQAGV</sequence>
<protein>
    <recommendedName>
        <fullName evidence="1">Lon protease 2</fullName>
        <ecNumber evidence="1">3.4.21.53</ecNumber>
    </recommendedName>
    <alternativeName>
        <fullName evidence="1">ATP-dependent protease La 2</fullName>
    </alternativeName>
</protein>
<proteinExistence type="inferred from homology"/>
<feature type="chain" id="PRO_0000396601" description="Lon protease 2">
    <location>
        <begin position="1"/>
        <end position="804"/>
    </location>
</feature>
<feature type="domain" description="Lon N-terminal" evidence="3">
    <location>
        <begin position="19"/>
        <end position="216"/>
    </location>
</feature>
<feature type="domain" description="Lon proteolytic" evidence="2">
    <location>
        <begin position="603"/>
        <end position="784"/>
    </location>
</feature>
<feature type="region of interest" description="Disordered" evidence="4">
    <location>
        <begin position="782"/>
        <end position="804"/>
    </location>
</feature>
<feature type="active site" evidence="1">
    <location>
        <position position="690"/>
    </location>
</feature>
<feature type="active site" evidence="1">
    <location>
        <position position="733"/>
    </location>
</feature>
<feature type="binding site" evidence="1">
    <location>
        <begin position="367"/>
        <end position="374"/>
    </location>
    <ligand>
        <name>ATP</name>
        <dbReference type="ChEBI" id="CHEBI:30616"/>
    </ligand>
</feature>
<keyword id="KW-0067">ATP-binding</keyword>
<keyword id="KW-0963">Cytoplasm</keyword>
<keyword id="KW-0378">Hydrolase</keyword>
<keyword id="KW-0547">Nucleotide-binding</keyword>
<keyword id="KW-0645">Protease</keyword>
<keyword id="KW-1185">Reference proteome</keyword>
<keyword id="KW-0720">Serine protease</keyword>
<keyword id="KW-0346">Stress response</keyword>
<name>LON2_SORC5</name>
<accession>A9GBF1</accession>
<organism>
    <name type="scientific">Sorangium cellulosum (strain So ce56)</name>
    <name type="common">Polyangium cellulosum (strain So ce56)</name>
    <dbReference type="NCBI Taxonomy" id="448385"/>
    <lineage>
        <taxon>Bacteria</taxon>
        <taxon>Pseudomonadati</taxon>
        <taxon>Myxococcota</taxon>
        <taxon>Polyangia</taxon>
        <taxon>Polyangiales</taxon>
        <taxon>Polyangiaceae</taxon>
        <taxon>Sorangium</taxon>
    </lineage>
</organism>
<gene>
    <name evidence="1" type="primary">lon2</name>
    <name type="ordered locus">sce2838</name>
</gene>
<evidence type="ECO:0000255" key="1">
    <source>
        <dbReference type="HAMAP-Rule" id="MF_01973"/>
    </source>
</evidence>
<evidence type="ECO:0000255" key="2">
    <source>
        <dbReference type="PROSITE-ProRule" id="PRU01122"/>
    </source>
</evidence>
<evidence type="ECO:0000255" key="3">
    <source>
        <dbReference type="PROSITE-ProRule" id="PRU01123"/>
    </source>
</evidence>
<evidence type="ECO:0000256" key="4">
    <source>
        <dbReference type="SAM" id="MobiDB-lite"/>
    </source>
</evidence>
<reference key="1">
    <citation type="journal article" date="2007" name="Nat. Biotechnol.">
        <title>Complete genome sequence of the myxobacterium Sorangium cellulosum.</title>
        <authorList>
            <person name="Schneiker S."/>
            <person name="Perlova O."/>
            <person name="Kaiser O."/>
            <person name="Gerth K."/>
            <person name="Alici A."/>
            <person name="Altmeyer M.O."/>
            <person name="Bartels D."/>
            <person name="Bekel T."/>
            <person name="Beyer S."/>
            <person name="Bode E."/>
            <person name="Bode H.B."/>
            <person name="Bolten C.J."/>
            <person name="Choudhuri J.V."/>
            <person name="Doss S."/>
            <person name="Elnakady Y.A."/>
            <person name="Frank B."/>
            <person name="Gaigalat L."/>
            <person name="Goesmann A."/>
            <person name="Groeger C."/>
            <person name="Gross F."/>
            <person name="Jelsbak L."/>
            <person name="Jelsbak L."/>
            <person name="Kalinowski J."/>
            <person name="Kegler C."/>
            <person name="Knauber T."/>
            <person name="Konietzny S."/>
            <person name="Kopp M."/>
            <person name="Krause L."/>
            <person name="Krug D."/>
            <person name="Linke B."/>
            <person name="Mahmud T."/>
            <person name="Martinez-Arias R."/>
            <person name="McHardy A.C."/>
            <person name="Merai M."/>
            <person name="Meyer F."/>
            <person name="Mormann S."/>
            <person name="Munoz-Dorado J."/>
            <person name="Perez J."/>
            <person name="Pradella S."/>
            <person name="Rachid S."/>
            <person name="Raddatz G."/>
            <person name="Rosenau F."/>
            <person name="Rueckert C."/>
            <person name="Sasse F."/>
            <person name="Scharfe M."/>
            <person name="Schuster S.C."/>
            <person name="Suen G."/>
            <person name="Treuner-Lange A."/>
            <person name="Velicer G.J."/>
            <person name="Vorholter F.-J."/>
            <person name="Weissman K.J."/>
            <person name="Welch R.D."/>
            <person name="Wenzel S.C."/>
            <person name="Whitworth D.E."/>
            <person name="Wilhelm S."/>
            <person name="Wittmann C."/>
            <person name="Bloecker H."/>
            <person name="Puehler A."/>
            <person name="Mueller R."/>
        </authorList>
    </citation>
    <scope>NUCLEOTIDE SEQUENCE [LARGE SCALE GENOMIC DNA]</scope>
    <source>
        <strain>So ce56</strain>
    </source>
</reference>
<dbReference type="EC" id="3.4.21.53" evidence="1"/>
<dbReference type="EMBL" id="AM746676">
    <property type="protein sequence ID" value="CAN92997.1"/>
    <property type="molecule type" value="Genomic_DNA"/>
</dbReference>
<dbReference type="RefSeq" id="WP_012235470.1">
    <property type="nucleotide sequence ID" value="NC_010162.1"/>
</dbReference>
<dbReference type="SMR" id="A9GBF1"/>
<dbReference type="STRING" id="448385.sce2838"/>
<dbReference type="KEGG" id="scl:sce2838"/>
<dbReference type="eggNOG" id="COG0466">
    <property type="taxonomic scope" value="Bacteria"/>
</dbReference>
<dbReference type="HOGENOM" id="CLU_004109_4_3_7"/>
<dbReference type="OrthoDB" id="9803599at2"/>
<dbReference type="BioCyc" id="SCEL448385:SCE_RS14560-MONOMER"/>
<dbReference type="Proteomes" id="UP000002139">
    <property type="component" value="Chromosome"/>
</dbReference>
<dbReference type="GO" id="GO:0005737">
    <property type="term" value="C:cytoplasm"/>
    <property type="evidence" value="ECO:0007669"/>
    <property type="project" value="UniProtKB-SubCell"/>
</dbReference>
<dbReference type="GO" id="GO:0005524">
    <property type="term" value="F:ATP binding"/>
    <property type="evidence" value="ECO:0007669"/>
    <property type="project" value="UniProtKB-UniRule"/>
</dbReference>
<dbReference type="GO" id="GO:0016887">
    <property type="term" value="F:ATP hydrolysis activity"/>
    <property type="evidence" value="ECO:0007669"/>
    <property type="project" value="UniProtKB-UniRule"/>
</dbReference>
<dbReference type="GO" id="GO:0004176">
    <property type="term" value="F:ATP-dependent peptidase activity"/>
    <property type="evidence" value="ECO:0007669"/>
    <property type="project" value="UniProtKB-UniRule"/>
</dbReference>
<dbReference type="GO" id="GO:0043565">
    <property type="term" value="F:sequence-specific DNA binding"/>
    <property type="evidence" value="ECO:0007669"/>
    <property type="project" value="UniProtKB-UniRule"/>
</dbReference>
<dbReference type="GO" id="GO:0004252">
    <property type="term" value="F:serine-type endopeptidase activity"/>
    <property type="evidence" value="ECO:0007669"/>
    <property type="project" value="UniProtKB-UniRule"/>
</dbReference>
<dbReference type="GO" id="GO:0034605">
    <property type="term" value="P:cellular response to heat"/>
    <property type="evidence" value="ECO:0007669"/>
    <property type="project" value="UniProtKB-UniRule"/>
</dbReference>
<dbReference type="GO" id="GO:0006515">
    <property type="term" value="P:protein quality control for misfolded or incompletely synthesized proteins"/>
    <property type="evidence" value="ECO:0007669"/>
    <property type="project" value="UniProtKB-UniRule"/>
</dbReference>
<dbReference type="CDD" id="cd19500">
    <property type="entry name" value="RecA-like_Lon"/>
    <property type="match status" value="1"/>
</dbReference>
<dbReference type="FunFam" id="1.20.5.5270:FF:000002">
    <property type="entry name" value="Lon protease homolog"/>
    <property type="match status" value="1"/>
</dbReference>
<dbReference type="FunFam" id="3.40.50.300:FF:000382">
    <property type="entry name" value="Lon protease homolog 2, peroxisomal"/>
    <property type="match status" value="1"/>
</dbReference>
<dbReference type="Gene3D" id="1.10.8.60">
    <property type="match status" value="1"/>
</dbReference>
<dbReference type="Gene3D" id="1.20.5.5270">
    <property type="match status" value="1"/>
</dbReference>
<dbReference type="Gene3D" id="1.20.58.1480">
    <property type="match status" value="1"/>
</dbReference>
<dbReference type="Gene3D" id="3.30.230.10">
    <property type="match status" value="1"/>
</dbReference>
<dbReference type="Gene3D" id="2.30.130.40">
    <property type="entry name" value="LON domain-like"/>
    <property type="match status" value="1"/>
</dbReference>
<dbReference type="Gene3D" id="3.40.50.300">
    <property type="entry name" value="P-loop containing nucleotide triphosphate hydrolases"/>
    <property type="match status" value="1"/>
</dbReference>
<dbReference type="HAMAP" id="MF_01973">
    <property type="entry name" value="lon_bact"/>
    <property type="match status" value="1"/>
</dbReference>
<dbReference type="InterPro" id="IPR003593">
    <property type="entry name" value="AAA+_ATPase"/>
</dbReference>
<dbReference type="InterPro" id="IPR003959">
    <property type="entry name" value="ATPase_AAA_core"/>
</dbReference>
<dbReference type="InterPro" id="IPR027543">
    <property type="entry name" value="Lon_bac"/>
</dbReference>
<dbReference type="InterPro" id="IPR004815">
    <property type="entry name" value="Lon_bac/euk-typ"/>
</dbReference>
<dbReference type="InterPro" id="IPR054594">
    <property type="entry name" value="Lon_lid"/>
</dbReference>
<dbReference type="InterPro" id="IPR008269">
    <property type="entry name" value="Lon_proteolytic"/>
</dbReference>
<dbReference type="InterPro" id="IPR027065">
    <property type="entry name" value="Lon_Prtase"/>
</dbReference>
<dbReference type="InterPro" id="IPR003111">
    <property type="entry name" value="Lon_prtase_N"/>
</dbReference>
<dbReference type="InterPro" id="IPR046336">
    <property type="entry name" value="Lon_prtase_N_sf"/>
</dbReference>
<dbReference type="InterPro" id="IPR027417">
    <property type="entry name" value="P-loop_NTPase"/>
</dbReference>
<dbReference type="InterPro" id="IPR008268">
    <property type="entry name" value="Peptidase_S16_AS"/>
</dbReference>
<dbReference type="InterPro" id="IPR015947">
    <property type="entry name" value="PUA-like_sf"/>
</dbReference>
<dbReference type="InterPro" id="IPR020568">
    <property type="entry name" value="Ribosomal_Su5_D2-typ_SF"/>
</dbReference>
<dbReference type="InterPro" id="IPR014721">
    <property type="entry name" value="Ribsml_uS5_D2-typ_fold_subgr"/>
</dbReference>
<dbReference type="NCBIfam" id="TIGR00763">
    <property type="entry name" value="lon"/>
    <property type="match status" value="1"/>
</dbReference>
<dbReference type="PANTHER" id="PTHR10046">
    <property type="entry name" value="ATP DEPENDENT LON PROTEASE FAMILY MEMBER"/>
    <property type="match status" value="1"/>
</dbReference>
<dbReference type="Pfam" id="PF00004">
    <property type="entry name" value="AAA"/>
    <property type="match status" value="1"/>
</dbReference>
<dbReference type="Pfam" id="PF05362">
    <property type="entry name" value="Lon_C"/>
    <property type="match status" value="1"/>
</dbReference>
<dbReference type="Pfam" id="PF22667">
    <property type="entry name" value="Lon_lid"/>
    <property type="match status" value="1"/>
</dbReference>
<dbReference type="Pfam" id="PF02190">
    <property type="entry name" value="LON_substr_bdg"/>
    <property type="match status" value="1"/>
</dbReference>
<dbReference type="PIRSF" id="PIRSF001174">
    <property type="entry name" value="Lon_proteas"/>
    <property type="match status" value="1"/>
</dbReference>
<dbReference type="PRINTS" id="PR00830">
    <property type="entry name" value="ENDOLAPTASE"/>
</dbReference>
<dbReference type="SMART" id="SM00382">
    <property type="entry name" value="AAA"/>
    <property type="match status" value="1"/>
</dbReference>
<dbReference type="SMART" id="SM00464">
    <property type="entry name" value="LON"/>
    <property type="match status" value="1"/>
</dbReference>
<dbReference type="SUPFAM" id="SSF52540">
    <property type="entry name" value="P-loop containing nucleoside triphosphate hydrolases"/>
    <property type="match status" value="1"/>
</dbReference>
<dbReference type="SUPFAM" id="SSF88697">
    <property type="entry name" value="PUA domain-like"/>
    <property type="match status" value="1"/>
</dbReference>
<dbReference type="SUPFAM" id="SSF54211">
    <property type="entry name" value="Ribosomal protein S5 domain 2-like"/>
    <property type="match status" value="1"/>
</dbReference>
<dbReference type="PROSITE" id="PS51787">
    <property type="entry name" value="LON_N"/>
    <property type="match status" value="1"/>
</dbReference>
<dbReference type="PROSITE" id="PS51786">
    <property type="entry name" value="LON_PROTEOLYTIC"/>
    <property type="match status" value="1"/>
</dbReference>
<dbReference type="PROSITE" id="PS01046">
    <property type="entry name" value="LON_SER"/>
    <property type="match status" value="1"/>
</dbReference>